<sequence>MSVQVVSAAAAAKVPEVELKDLSPSEAEPQLGLSTAAVSAMAPPAGGGDPEAPAPAAERPPAPGPGSGPAAALSPAAGKVPQASAMKRSDPHHQHQRHRDGGEALVSPDGTVTEAPRTVKKQIQFADQKQEFNKRPTKIGRRSLSRSISQSSTDSYSSAASYTDSSDDETSPRDKQQKNSKGNSDFCVKNIKQAEFGRREIEIAEQEMPALMALRKRAQGEKPLAGAKIVGCTHITAQTAVLMETLGALGAQCRWAACNIYSTLNEVAAALAESGFPVFAWKGESEDDFWWCIDRCVNVEGWQPNMILDDGGDLTHWIYKKYPNMFKKIKGIVEESVTGVHRLYQLSKAGKLCVPAMNVNDSVTKQKFDNLYCCRESILDGLKRTTDMMFGGKQVVVCGYGEVGKGCCAALKAMGSIVYVTEIDPICALQACMDGFRLVKLNEVIRQVDIVITCTGNKNVVTREHLDRMKNSCIVCNMGHSNTEIDVASLRTPELTWERVRSQVDHVIWPDGKRIILLAEGRLLNLSCSTVPTFVLSITATTQALALIELYNAPEGRYKQDVYLLPKKMDEYVASLHLPTFDAHLTELTDEQAKYLGLNKNGPFKPNYYRY</sequence>
<name>SAHH3_BOVIN</name>
<reference key="1">
    <citation type="journal article" date="2009" name="Genome Biol.">
        <title>A whole-genome assembly of the domestic cow, Bos taurus.</title>
        <authorList>
            <person name="Zimin A.V."/>
            <person name="Delcher A.L."/>
            <person name="Florea L."/>
            <person name="Kelley D.R."/>
            <person name="Schatz M.C."/>
            <person name="Puiu D."/>
            <person name="Hanrahan F."/>
            <person name="Pertea G."/>
            <person name="Van Tassell C.P."/>
            <person name="Sonstegard T.S."/>
            <person name="Marcais G."/>
            <person name="Roberts M."/>
            <person name="Subramanian P."/>
            <person name="Yorke J.A."/>
            <person name="Salzberg S.L."/>
        </authorList>
    </citation>
    <scope>NUCLEOTIDE SEQUENCE [LARGE SCALE GENOMIC DNA]</scope>
    <source>
        <strain>Hereford</strain>
    </source>
</reference>
<reference key="2">
    <citation type="submission" date="2007-06" db="EMBL/GenBank/DDBJ databases">
        <authorList>
            <consortium name="NIH - Mammalian Gene Collection (MGC) project"/>
        </authorList>
    </citation>
    <scope>NUCLEOTIDE SEQUENCE [LARGE SCALE MRNA]</scope>
</reference>
<reference key="3">
    <citation type="journal article" date="2014" name="FEBS Lett.">
        <title>AHCYL2 (long-IRBIT) as a potential regulator of the electrogenic Na(+)-HCO3(-) cotransporter NBCe1-B.</title>
        <authorList>
            <person name="Yamaguchi S."/>
            <person name="Ishikawa T."/>
        </authorList>
    </citation>
    <scope>FUNCTION</scope>
    <scope>INTERACTION WITH SLC4A4</scope>
    <scope>TISSUE SPECIFICITY</scope>
    <scope>SUBCELLULAR LOCATION</scope>
</reference>
<evidence type="ECO:0000250" key="1"/>
<evidence type="ECO:0000250" key="2">
    <source>
        <dbReference type="UniProtKB" id="Q68FL4"/>
    </source>
</evidence>
<evidence type="ECO:0000250" key="3">
    <source>
        <dbReference type="UniProtKB" id="Q96HN2"/>
    </source>
</evidence>
<evidence type="ECO:0000256" key="4">
    <source>
        <dbReference type="SAM" id="MobiDB-lite"/>
    </source>
</evidence>
<evidence type="ECO:0000269" key="5">
    <source>
    </source>
</evidence>
<evidence type="ECO:0000303" key="6">
    <source>
    </source>
</evidence>
<evidence type="ECO:0000305" key="7"/>
<accession>A6QLP2</accession>
<dbReference type="EC" id="3.13.2.1"/>
<dbReference type="EMBL" id="DAAA02011501">
    <property type="status" value="NOT_ANNOTATED_CDS"/>
    <property type="molecule type" value="Genomic_DNA"/>
</dbReference>
<dbReference type="EMBL" id="DAAA02011502">
    <property type="status" value="NOT_ANNOTATED_CDS"/>
    <property type="molecule type" value="Genomic_DNA"/>
</dbReference>
<dbReference type="EMBL" id="DAAA02011503">
    <property type="status" value="NOT_ANNOTATED_CDS"/>
    <property type="molecule type" value="Genomic_DNA"/>
</dbReference>
<dbReference type="EMBL" id="DAAA02011504">
    <property type="status" value="NOT_ANNOTATED_CDS"/>
    <property type="molecule type" value="Genomic_DNA"/>
</dbReference>
<dbReference type="EMBL" id="DAAA02011505">
    <property type="status" value="NOT_ANNOTATED_CDS"/>
    <property type="molecule type" value="Genomic_DNA"/>
</dbReference>
<dbReference type="EMBL" id="BC148036">
    <property type="protein sequence ID" value="AAI48037.1"/>
    <property type="molecule type" value="mRNA"/>
</dbReference>
<dbReference type="RefSeq" id="NP_001094613.1">
    <property type="nucleotide sequence ID" value="NM_001101143.1"/>
</dbReference>
<dbReference type="SMR" id="A6QLP2"/>
<dbReference type="FunCoup" id="A6QLP2">
    <property type="interactions" value="844"/>
</dbReference>
<dbReference type="IntAct" id="A6QLP2">
    <property type="interactions" value="1"/>
</dbReference>
<dbReference type="MINT" id="A6QLP2"/>
<dbReference type="STRING" id="9913.ENSBTAP00000002300"/>
<dbReference type="PaxDb" id="9913-ENSBTAP00000002300"/>
<dbReference type="GeneID" id="532836"/>
<dbReference type="KEGG" id="bta:532836"/>
<dbReference type="CTD" id="23382"/>
<dbReference type="VEuPathDB" id="HostDB:ENSBTAG00000001754"/>
<dbReference type="eggNOG" id="KOG1370">
    <property type="taxonomic scope" value="Eukaryota"/>
</dbReference>
<dbReference type="HOGENOM" id="CLU_025194_2_1_1"/>
<dbReference type="InParanoid" id="A6QLP2"/>
<dbReference type="OrthoDB" id="10007170at2759"/>
<dbReference type="TreeFam" id="TF300415"/>
<dbReference type="Reactome" id="R-BTA-425381">
    <property type="pathway name" value="Bicarbonate transporters"/>
</dbReference>
<dbReference type="UniPathway" id="UPA00314">
    <property type="reaction ID" value="UER00076"/>
</dbReference>
<dbReference type="Proteomes" id="UP000009136">
    <property type="component" value="Chromosome 4"/>
</dbReference>
<dbReference type="Bgee" id="ENSBTAG00000001754">
    <property type="expression patterns" value="Expressed in rumen papilla and 106 other cell types or tissues"/>
</dbReference>
<dbReference type="GO" id="GO:0005829">
    <property type="term" value="C:cytosol"/>
    <property type="evidence" value="ECO:0000318"/>
    <property type="project" value="GO_Central"/>
</dbReference>
<dbReference type="GO" id="GO:0005783">
    <property type="term" value="C:endoplasmic reticulum"/>
    <property type="evidence" value="ECO:0007669"/>
    <property type="project" value="UniProtKB-KW"/>
</dbReference>
<dbReference type="GO" id="GO:0016787">
    <property type="term" value="F:hydrolase activity"/>
    <property type="evidence" value="ECO:0007669"/>
    <property type="project" value="UniProtKB-KW"/>
</dbReference>
<dbReference type="GO" id="GO:0006730">
    <property type="term" value="P:one-carbon metabolic process"/>
    <property type="evidence" value="ECO:0007669"/>
    <property type="project" value="UniProtKB-KW"/>
</dbReference>
<dbReference type="GO" id="GO:0033353">
    <property type="term" value="P:S-adenosylmethionine cycle"/>
    <property type="evidence" value="ECO:0000318"/>
    <property type="project" value="GO_Central"/>
</dbReference>
<dbReference type="CDD" id="cd00401">
    <property type="entry name" value="SAHH"/>
    <property type="match status" value="1"/>
</dbReference>
<dbReference type="FunFam" id="3.40.50.1480:FF:000002">
    <property type="entry name" value="Adenosylhomocysteinase"/>
    <property type="match status" value="1"/>
</dbReference>
<dbReference type="FunFam" id="3.40.50.1480:FF:000007">
    <property type="entry name" value="Adenosylhomocysteinase"/>
    <property type="match status" value="1"/>
</dbReference>
<dbReference type="FunFam" id="3.40.50.720:FF:000035">
    <property type="entry name" value="Adenosylhomocysteinase"/>
    <property type="match status" value="1"/>
</dbReference>
<dbReference type="FunFam" id="3.40.50.1480:FF:000009">
    <property type="entry name" value="Adenosylhomocysteinase like 2"/>
    <property type="match status" value="1"/>
</dbReference>
<dbReference type="Gene3D" id="3.40.50.1480">
    <property type="entry name" value="Adenosylhomocysteinase-like"/>
    <property type="match status" value="3"/>
</dbReference>
<dbReference type="Gene3D" id="3.40.50.720">
    <property type="entry name" value="NAD(P)-binding Rossmann-like Domain"/>
    <property type="match status" value="1"/>
</dbReference>
<dbReference type="InterPro" id="IPR042172">
    <property type="entry name" value="Adenosylhomocyst_ase-like_sf"/>
</dbReference>
<dbReference type="InterPro" id="IPR000043">
    <property type="entry name" value="Adenosylhomocysteinase-like"/>
</dbReference>
<dbReference type="InterPro" id="IPR015878">
    <property type="entry name" value="Ado_hCys_hydrolase_NAD-bd"/>
</dbReference>
<dbReference type="InterPro" id="IPR036291">
    <property type="entry name" value="NAD(P)-bd_dom_sf"/>
</dbReference>
<dbReference type="InterPro" id="IPR020082">
    <property type="entry name" value="S-Ado-L-homoCys_hydrolase_CS"/>
</dbReference>
<dbReference type="NCBIfam" id="TIGR00936">
    <property type="entry name" value="ahcY"/>
    <property type="match status" value="1"/>
</dbReference>
<dbReference type="NCBIfam" id="NF004005">
    <property type="entry name" value="PRK05476.2-3"/>
    <property type="match status" value="1"/>
</dbReference>
<dbReference type="PANTHER" id="PTHR23420">
    <property type="entry name" value="ADENOSYLHOMOCYSTEINASE"/>
    <property type="match status" value="1"/>
</dbReference>
<dbReference type="PANTHER" id="PTHR23420:SF2">
    <property type="entry name" value="ADENOSYLHOMOCYSTEINASE 3"/>
    <property type="match status" value="1"/>
</dbReference>
<dbReference type="Pfam" id="PF05221">
    <property type="entry name" value="AdoHcyase"/>
    <property type="match status" value="1"/>
</dbReference>
<dbReference type="Pfam" id="PF00670">
    <property type="entry name" value="AdoHcyase_NAD"/>
    <property type="match status" value="1"/>
</dbReference>
<dbReference type="SMART" id="SM00996">
    <property type="entry name" value="AdoHcyase"/>
    <property type="match status" value="1"/>
</dbReference>
<dbReference type="SMART" id="SM00997">
    <property type="entry name" value="AdoHcyase_NAD"/>
    <property type="match status" value="1"/>
</dbReference>
<dbReference type="SUPFAM" id="SSF52283">
    <property type="entry name" value="Formate/glycerate dehydrogenase catalytic domain-like"/>
    <property type="match status" value="1"/>
</dbReference>
<dbReference type="SUPFAM" id="SSF51735">
    <property type="entry name" value="NAD(P)-binding Rossmann-fold domains"/>
    <property type="match status" value="1"/>
</dbReference>
<dbReference type="PROSITE" id="PS00738">
    <property type="entry name" value="ADOHCYASE_1"/>
    <property type="match status" value="1"/>
</dbReference>
<dbReference type="PROSITE" id="PS00739">
    <property type="entry name" value="ADOHCYASE_2"/>
    <property type="match status" value="1"/>
</dbReference>
<gene>
    <name evidence="6" type="primary">AHCYL2</name>
</gene>
<proteinExistence type="evidence at protein level"/>
<protein>
    <recommendedName>
        <fullName>Adenosylhomocysteinase 3</fullName>
        <shortName>AdoHcyase 3</shortName>
        <ecNumber>3.13.2.1</ecNumber>
    </recommendedName>
    <alternativeName>
        <fullName>IP(3)Rs binding protein released with IP(3) 2</fullName>
        <shortName>IRBIT2</shortName>
    </alternativeName>
    <alternativeName>
        <fullName evidence="6">Long-IRBIT</fullName>
    </alternativeName>
</protein>
<keyword id="KW-0007">Acetylation</keyword>
<keyword id="KW-0963">Cytoplasm</keyword>
<keyword id="KW-0256">Endoplasmic reticulum</keyword>
<keyword id="KW-0378">Hydrolase</keyword>
<keyword id="KW-0492">Microsome</keyword>
<keyword id="KW-0520">NAD</keyword>
<keyword id="KW-0554">One-carbon metabolism</keyword>
<keyword id="KW-0597">Phosphoprotein</keyword>
<keyword id="KW-1185">Reference proteome</keyword>
<organism>
    <name type="scientific">Bos taurus</name>
    <name type="common">Bovine</name>
    <dbReference type="NCBI Taxonomy" id="9913"/>
    <lineage>
        <taxon>Eukaryota</taxon>
        <taxon>Metazoa</taxon>
        <taxon>Chordata</taxon>
        <taxon>Craniata</taxon>
        <taxon>Vertebrata</taxon>
        <taxon>Euteleostomi</taxon>
        <taxon>Mammalia</taxon>
        <taxon>Eutheria</taxon>
        <taxon>Laurasiatheria</taxon>
        <taxon>Artiodactyla</taxon>
        <taxon>Ruminantia</taxon>
        <taxon>Pecora</taxon>
        <taxon>Bovidae</taxon>
        <taxon>Bovinae</taxon>
        <taxon>Bos</taxon>
    </lineage>
</organism>
<feature type="initiator methionine" description="Removed" evidence="3">
    <location>
        <position position="1"/>
    </location>
</feature>
<feature type="chain" id="PRO_0000433238" description="Adenosylhomocysteinase 3">
    <location>
        <begin position="2"/>
        <end position="611"/>
    </location>
</feature>
<feature type="region of interest" description="Disordered" evidence="4">
    <location>
        <begin position="1"/>
        <end position="184"/>
    </location>
</feature>
<feature type="region of interest" description="LISN domain, inhibits interaction with ITPR1" evidence="3">
    <location>
        <begin position="2"/>
        <end position="109"/>
    </location>
</feature>
<feature type="compositionally biased region" description="Low complexity" evidence="4">
    <location>
        <begin position="1"/>
        <end position="14"/>
    </location>
</feature>
<feature type="compositionally biased region" description="Low complexity" evidence="4">
    <location>
        <begin position="40"/>
        <end position="57"/>
    </location>
</feature>
<feature type="compositionally biased region" description="Low complexity" evidence="4">
    <location>
        <begin position="68"/>
        <end position="78"/>
    </location>
</feature>
<feature type="compositionally biased region" description="Basic residues" evidence="4">
    <location>
        <begin position="135"/>
        <end position="144"/>
    </location>
</feature>
<feature type="compositionally biased region" description="Low complexity" evidence="4">
    <location>
        <begin position="145"/>
        <end position="164"/>
    </location>
</feature>
<feature type="binding site" evidence="1">
    <location>
        <position position="236"/>
    </location>
    <ligand>
        <name>substrate</name>
    </ligand>
</feature>
<feature type="binding site" evidence="1">
    <location>
        <position position="310"/>
    </location>
    <ligand>
        <name>substrate</name>
    </ligand>
</feature>
<feature type="binding site" evidence="1">
    <location>
        <position position="335"/>
    </location>
    <ligand>
        <name>substrate</name>
    </ligand>
</feature>
<feature type="binding site" evidence="1">
    <location>
        <begin position="336"/>
        <end position="338"/>
    </location>
    <ligand>
        <name>NAD(+)</name>
        <dbReference type="ChEBI" id="CHEBI:57540"/>
    </ligand>
</feature>
<feature type="binding site" evidence="1">
    <location>
        <position position="365"/>
    </location>
    <ligand>
        <name>substrate</name>
    </ligand>
</feature>
<feature type="binding site" evidence="1">
    <location>
        <position position="369"/>
    </location>
    <ligand>
        <name>substrate</name>
    </ligand>
</feature>
<feature type="binding site" evidence="1">
    <location>
        <position position="370"/>
    </location>
    <ligand>
        <name>NAD(+)</name>
        <dbReference type="ChEBI" id="CHEBI:57540"/>
    </ligand>
</feature>
<feature type="binding site" evidence="3">
    <location>
        <begin position="401"/>
        <end position="406"/>
    </location>
    <ligand>
        <name>NAD(+)</name>
        <dbReference type="ChEBI" id="CHEBI:57540"/>
    </ligand>
</feature>
<feature type="binding site" evidence="3">
    <location>
        <position position="422"/>
    </location>
    <ligand>
        <name>NAD(+)</name>
        <dbReference type="ChEBI" id="CHEBI:57540"/>
    </ligand>
</feature>
<feature type="binding site" evidence="3">
    <location>
        <position position="457"/>
    </location>
    <ligand>
        <name>NAD(+)</name>
        <dbReference type="ChEBI" id="CHEBI:57540"/>
    </ligand>
</feature>
<feature type="binding site" evidence="3">
    <location>
        <begin position="478"/>
        <end position="479"/>
    </location>
    <ligand>
        <name>NAD(+)</name>
        <dbReference type="ChEBI" id="CHEBI:57540"/>
    </ligand>
</feature>
<feature type="binding site" evidence="3">
    <location>
        <position position="525"/>
    </location>
    <ligand>
        <name>NAD(+)</name>
        <dbReference type="ChEBI" id="CHEBI:57540"/>
    </ligand>
</feature>
<feature type="modified residue" description="N-acetylserine" evidence="3">
    <location>
        <position position="2"/>
    </location>
</feature>
<feature type="modified residue" description="Phosphoserine" evidence="3">
    <location>
        <position position="107"/>
    </location>
</feature>
<feature type="modified residue" description="Phosphoserine" evidence="3">
    <location>
        <position position="149"/>
    </location>
</feature>
<feature type="modified residue" description="Phosphoserine" evidence="3">
    <location>
        <position position="152"/>
    </location>
</feature>
<feature type="modified residue" description="Phosphoserine" evidence="3">
    <location>
        <position position="155"/>
    </location>
</feature>
<feature type="modified residue" description="Phosphoserine" evidence="3">
    <location>
        <position position="158"/>
    </location>
</feature>
<comment type="function">
    <text evidence="3 5">May regulate the electrogenic sodium/bicarbonate cotransporter SLC4A4 activity and Mg(2+)-sensitivity. On the contrary of its homolog AHCYL1, does not regulate ITPR1 sensitivity to inositol 1,4,5-trisphosphate (By similarity).</text>
</comment>
<comment type="catalytic activity">
    <reaction>
        <text>S-adenosyl-L-homocysteine + H2O = L-homocysteine + adenosine</text>
        <dbReference type="Rhea" id="RHEA:21708"/>
        <dbReference type="ChEBI" id="CHEBI:15377"/>
        <dbReference type="ChEBI" id="CHEBI:16335"/>
        <dbReference type="ChEBI" id="CHEBI:57856"/>
        <dbReference type="ChEBI" id="CHEBI:58199"/>
        <dbReference type="EC" id="3.13.2.1"/>
    </reaction>
</comment>
<comment type="cofactor">
    <cofactor>
        <name>NAD(+)</name>
        <dbReference type="ChEBI" id="CHEBI:57540"/>
    </cofactor>
    <text>Binds 1 NAD(+) per subunit.</text>
</comment>
<comment type="pathway">
    <text>Amino-acid biosynthesis; L-homocysteine biosynthesis; L-homocysteine from S-adenosyl-L-homocysteine: step 1/1.</text>
</comment>
<comment type="subunit">
    <text evidence="3 5">Homotetramer. Forms heteromultimers with AHCYL1 (via the C-terminal region). Interacts with ITPR1; with lower affinity than AHCYL1 and maybe via ITPR1 (By similarity). Interacts with SLC4A4 (PubMed:24472682). Interacts with ZCCHC4 (By similarity).</text>
</comment>
<comment type="interaction">
    <interactant intactId="EBI-9076161">
        <id>A6QLP2</id>
    </interactant>
    <interactant intactId="EBI-9076174">
        <id>Q9GL77</id>
        <label>SLC4A4</label>
    </interactant>
    <organismsDiffer>false</organismsDiffer>
    <experiments>5</experiments>
</comment>
<comment type="subcellular location">
    <subcellularLocation>
        <location evidence="5">Cytoplasm</location>
    </subcellularLocation>
    <subcellularLocation>
        <location evidence="2">Microsome</location>
    </subcellularLocation>
    <text evidence="2">Associates with membranes when phosphorylated, probably through interaction with ITPR1.</text>
</comment>
<comment type="tissue specificity">
    <text evidence="5">Expressed in parotid and acinar cells (at protein level).</text>
</comment>
<comment type="PTM">
    <text evidence="2">Phosphorylated during neuronal differentiation at the LISN domain.</text>
</comment>
<comment type="similarity">
    <text evidence="7">Belongs to the adenosylhomocysteinase family.</text>
</comment>